<organism>
    <name type="scientific">Shewanella denitrificans (strain OS217 / ATCC BAA-1090 / DSM 15013)</name>
    <dbReference type="NCBI Taxonomy" id="318161"/>
    <lineage>
        <taxon>Bacteria</taxon>
        <taxon>Pseudomonadati</taxon>
        <taxon>Pseudomonadota</taxon>
        <taxon>Gammaproteobacteria</taxon>
        <taxon>Alteromonadales</taxon>
        <taxon>Shewanellaceae</taxon>
        <taxon>Shewanella</taxon>
    </lineage>
</organism>
<proteinExistence type="inferred from homology"/>
<name>ENGB_SHEDO</name>
<dbReference type="EMBL" id="CP000302">
    <property type="protein sequence ID" value="ABE56896.1"/>
    <property type="molecule type" value="Genomic_DNA"/>
</dbReference>
<dbReference type="RefSeq" id="WP_011498035.1">
    <property type="nucleotide sequence ID" value="NC_007954.1"/>
</dbReference>
<dbReference type="SMR" id="Q12I30"/>
<dbReference type="STRING" id="318161.Sden_3621"/>
<dbReference type="KEGG" id="sdn:Sden_3621"/>
<dbReference type="eggNOG" id="COG0218">
    <property type="taxonomic scope" value="Bacteria"/>
</dbReference>
<dbReference type="HOGENOM" id="CLU_033732_1_2_6"/>
<dbReference type="OrthoDB" id="9804921at2"/>
<dbReference type="Proteomes" id="UP000001982">
    <property type="component" value="Chromosome"/>
</dbReference>
<dbReference type="GO" id="GO:0005829">
    <property type="term" value="C:cytosol"/>
    <property type="evidence" value="ECO:0007669"/>
    <property type="project" value="TreeGrafter"/>
</dbReference>
<dbReference type="GO" id="GO:0005525">
    <property type="term" value="F:GTP binding"/>
    <property type="evidence" value="ECO:0007669"/>
    <property type="project" value="UniProtKB-UniRule"/>
</dbReference>
<dbReference type="GO" id="GO:0046872">
    <property type="term" value="F:metal ion binding"/>
    <property type="evidence" value="ECO:0007669"/>
    <property type="project" value="UniProtKB-KW"/>
</dbReference>
<dbReference type="GO" id="GO:0000917">
    <property type="term" value="P:division septum assembly"/>
    <property type="evidence" value="ECO:0007669"/>
    <property type="project" value="UniProtKB-KW"/>
</dbReference>
<dbReference type="CDD" id="cd01876">
    <property type="entry name" value="YihA_EngB"/>
    <property type="match status" value="1"/>
</dbReference>
<dbReference type="FunFam" id="3.40.50.300:FF:000098">
    <property type="entry name" value="Probable GTP-binding protein EngB"/>
    <property type="match status" value="1"/>
</dbReference>
<dbReference type="Gene3D" id="3.40.50.300">
    <property type="entry name" value="P-loop containing nucleotide triphosphate hydrolases"/>
    <property type="match status" value="1"/>
</dbReference>
<dbReference type="HAMAP" id="MF_00321">
    <property type="entry name" value="GTPase_EngB"/>
    <property type="match status" value="1"/>
</dbReference>
<dbReference type="InterPro" id="IPR030393">
    <property type="entry name" value="G_ENGB_dom"/>
</dbReference>
<dbReference type="InterPro" id="IPR006073">
    <property type="entry name" value="GTP-bd"/>
</dbReference>
<dbReference type="InterPro" id="IPR019987">
    <property type="entry name" value="GTP-bd_ribosome_bio_YsxC"/>
</dbReference>
<dbReference type="InterPro" id="IPR027417">
    <property type="entry name" value="P-loop_NTPase"/>
</dbReference>
<dbReference type="NCBIfam" id="TIGR03598">
    <property type="entry name" value="GTPase_YsxC"/>
    <property type="match status" value="1"/>
</dbReference>
<dbReference type="PANTHER" id="PTHR11649:SF13">
    <property type="entry name" value="ENGB-TYPE G DOMAIN-CONTAINING PROTEIN"/>
    <property type="match status" value="1"/>
</dbReference>
<dbReference type="PANTHER" id="PTHR11649">
    <property type="entry name" value="MSS1/TRME-RELATED GTP-BINDING PROTEIN"/>
    <property type="match status" value="1"/>
</dbReference>
<dbReference type="Pfam" id="PF01926">
    <property type="entry name" value="MMR_HSR1"/>
    <property type="match status" value="1"/>
</dbReference>
<dbReference type="SUPFAM" id="SSF52540">
    <property type="entry name" value="P-loop containing nucleoside triphosphate hydrolases"/>
    <property type="match status" value="1"/>
</dbReference>
<dbReference type="PROSITE" id="PS51706">
    <property type="entry name" value="G_ENGB"/>
    <property type="match status" value="1"/>
</dbReference>
<keyword id="KW-0131">Cell cycle</keyword>
<keyword id="KW-0132">Cell division</keyword>
<keyword id="KW-0342">GTP-binding</keyword>
<keyword id="KW-0460">Magnesium</keyword>
<keyword id="KW-0479">Metal-binding</keyword>
<keyword id="KW-0547">Nucleotide-binding</keyword>
<keyword id="KW-1185">Reference proteome</keyword>
<keyword id="KW-0717">Septation</keyword>
<feature type="chain" id="PRO_0000266942" description="Probable GTP-binding protein EngB">
    <location>
        <begin position="1"/>
        <end position="219"/>
    </location>
</feature>
<feature type="domain" description="EngB-type G" evidence="1">
    <location>
        <begin position="31"/>
        <end position="205"/>
    </location>
</feature>
<feature type="binding site" evidence="1">
    <location>
        <begin position="39"/>
        <end position="46"/>
    </location>
    <ligand>
        <name>GTP</name>
        <dbReference type="ChEBI" id="CHEBI:37565"/>
    </ligand>
</feature>
<feature type="binding site" evidence="1">
    <location>
        <position position="46"/>
    </location>
    <ligand>
        <name>Mg(2+)</name>
        <dbReference type="ChEBI" id="CHEBI:18420"/>
    </ligand>
</feature>
<feature type="binding site" evidence="1">
    <location>
        <begin position="66"/>
        <end position="70"/>
    </location>
    <ligand>
        <name>GTP</name>
        <dbReference type="ChEBI" id="CHEBI:37565"/>
    </ligand>
</feature>
<feature type="binding site" evidence="1">
    <location>
        <position position="68"/>
    </location>
    <ligand>
        <name>Mg(2+)</name>
        <dbReference type="ChEBI" id="CHEBI:18420"/>
    </ligand>
</feature>
<feature type="binding site" evidence="1">
    <location>
        <begin position="84"/>
        <end position="87"/>
    </location>
    <ligand>
        <name>GTP</name>
        <dbReference type="ChEBI" id="CHEBI:37565"/>
    </ligand>
</feature>
<feature type="binding site" evidence="1">
    <location>
        <begin position="151"/>
        <end position="154"/>
    </location>
    <ligand>
        <name>GTP</name>
        <dbReference type="ChEBI" id="CHEBI:37565"/>
    </ligand>
</feature>
<feature type="binding site" evidence="1">
    <location>
        <begin position="184"/>
        <end position="186"/>
    </location>
    <ligand>
        <name>GTP</name>
        <dbReference type="ChEBI" id="CHEBI:37565"/>
    </ligand>
</feature>
<protein>
    <recommendedName>
        <fullName evidence="1">Probable GTP-binding protein EngB</fullName>
    </recommendedName>
</protein>
<reference key="1">
    <citation type="submission" date="2006-03" db="EMBL/GenBank/DDBJ databases">
        <title>Complete sequence of Shewanella denitrificans OS217.</title>
        <authorList>
            <consortium name="US DOE Joint Genome Institute"/>
            <person name="Copeland A."/>
            <person name="Lucas S."/>
            <person name="Lapidus A."/>
            <person name="Barry K."/>
            <person name="Detter J.C."/>
            <person name="Glavina del Rio T."/>
            <person name="Hammon N."/>
            <person name="Israni S."/>
            <person name="Dalin E."/>
            <person name="Tice H."/>
            <person name="Pitluck S."/>
            <person name="Brettin T."/>
            <person name="Bruce D."/>
            <person name="Han C."/>
            <person name="Tapia R."/>
            <person name="Gilna P."/>
            <person name="Kiss H."/>
            <person name="Schmutz J."/>
            <person name="Larimer F."/>
            <person name="Land M."/>
            <person name="Hauser L."/>
            <person name="Kyrpides N."/>
            <person name="Lykidis A."/>
            <person name="Richardson P."/>
        </authorList>
    </citation>
    <scope>NUCLEOTIDE SEQUENCE [LARGE SCALE GENOMIC DNA]</scope>
    <source>
        <strain>OS217 / ATCC BAA-1090 / DSM 15013</strain>
    </source>
</reference>
<evidence type="ECO:0000255" key="1">
    <source>
        <dbReference type="HAMAP-Rule" id="MF_00321"/>
    </source>
</evidence>
<sequence>MSESIMDFRRAKFLISAPDIAHLNQYLPGDVGVEIAFAGRSNAGKSSALNALTEQKSLARTSKTPGRTQLINVFALDDDRRLVDLPGYGFAQVPLALKNKWQQALGEYLQKRACLSGVVVLMDIRHPLKDLDMQMIEWAVASEIPVLALLTKSDKLAQSAKMKTVNEVRSALADFGDWVKVEPFSSLKGTGKPKVLSILNEWCHPQWLMDAMAQESPED</sequence>
<accession>Q12I30</accession>
<comment type="function">
    <text evidence="1">Necessary for normal cell division and for the maintenance of normal septation.</text>
</comment>
<comment type="cofactor">
    <cofactor evidence="1">
        <name>Mg(2+)</name>
        <dbReference type="ChEBI" id="CHEBI:18420"/>
    </cofactor>
</comment>
<comment type="similarity">
    <text evidence="1">Belongs to the TRAFAC class TrmE-Era-EngA-EngB-Septin-like GTPase superfamily. EngB GTPase family.</text>
</comment>
<gene>
    <name evidence="1" type="primary">engB</name>
    <name type="ordered locus">Sden_3621</name>
</gene>